<keyword id="KW-1003">Cell membrane</keyword>
<keyword id="KW-0472">Membrane</keyword>
<keyword id="KW-1185">Reference proteome</keyword>
<keyword id="KW-0812">Transmembrane</keyword>
<keyword id="KW-1133">Transmembrane helix</keyword>
<reference key="1">
    <citation type="journal article" date="2001" name="Proc. Natl. Acad. Sci. U.S.A.">
        <title>Complete genomic sequence of Pasteurella multocida Pm70.</title>
        <authorList>
            <person name="May B.J."/>
            <person name="Zhang Q."/>
            <person name="Li L.L."/>
            <person name="Paustian M.L."/>
            <person name="Whittam T.S."/>
            <person name="Kapur V."/>
        </authorList>
    </citation>
    <scope>NUCLEOTIDE SEQUENCE [LARGE SCALE GENOMIC DNA]</scope>
    <source>
        <strain>Pm70</strain>
    </source>
</reference>
<gene>
    <name type="ordered locus">PM0681</name>
</gene>
<comment type="subcellular location">
    <subcellularLocation>
        <location evidence="2">Cell membrane</location>
        <topology evidence="2">Multi-pass membrane protein</topology>
    </subcellularLocation>
</comment>
<feature type="chain" id="PRO_0000216303" description="Uncharacterized protein PM0681">
    <location>
        <begin position="1"/>
        <end position="433"/>
    </location>
</feature>
<feature type="transmembrane region" description="Helical" evidence="1">
    <location>
        <begin position="28"/>
        <end position="48"/>
    </location>
</feature>
<feature type="transmembrane region" description="Helical" evidence="1">
    <location>
        <begin position="56"/>
        <end position="76"/>
    </location>
</feature>
<feature type="transmembrane region" description="Helical" evidence="1">
    <location>
        <begin position="102"/>
        <end position="122"/>
    </location>
</feature>
<feature type="transmembrane region" description="Helical" evidence="1">
    <location>
        <begin position="126"/>
        <end position="146"/>
    </location>
</feature>
<feature type="transmembrane region" description="Helical" evidence="1">
    <location>
        <begin position="164"/>
        <end position="184"/>
    </location>
</feature>
<feature type="transmembrane region" description="Helical" evidence="1">
    <location>
        <begin position="207"/>
        <end position="227"/>
    </location>
</feature>
<feature type="transmembrane region" description="Helical" evidence="1">
    <location>
        <begin position="250"/>
        <end position="270"/>
    </location>
</feature>
<feature type="transmembrane region" description="Helical" evidence="1">
    <location>
        <begin position="304"/>
        <end position="324"/>
    </location>
</feature>
<feature type="transmembrane region" description="Helical" evidence="1">
    <location>
        <begin position="345"/>
        <end position="365"/>
    </location>
</feature>
<feature type="transmembrane region" description="Helical" evidence="1">
    <location>
        <begin position="375"/>
        <end position="395"/>
    </location>
</feature>
<feature type="transmembrane region" description="Helical" evidence="1">
    <location>
        <begin position="406"/>
        <end position="426"/>
    </location>
</feature>
<proteinExistence type="predicted"/>
<dbReference type="EMBL" id="AE004439">
    <property type="protein sequence ID" value="AAK02765.1"/>
    <property type="molecule type" value="Genomic_DNA"/>
</dbReference>
<dbReference type="SMR" id="P57864"/>
<dbReference type="STRING" id="272843.PM0681"/>
<dbReference type="EnsemblBacteria" id="AAK02765">
    <property type="protein sequence ID" value="AAK02765"/>
    <property type="gene ID" value="PM0681"/>
</dbReference>
<dbReference type="KEGG" id="pmu:PM0681"/>
<dbReference type="HOGENOM" id="CLU_640842_0_0_6"/>
<dbReference type="Proteomes" id="UP000000809">
    <property type="component" value="Chromosome"/>
</dbReference>
<dbReference type="GO" id="GO:0005886">
    <property type="term" value="C:plasma membrane"/>
    <property type="evidence" value="ECO:0007669"/>
    <property type="project" value="UniProtKB-SubCell"/>
</dbReference>
<organism>
    <name type="scientific">Pasteurella multocida (strain Pm70)</name>
    <dbReference type="NCBI Taxonomy" id="272843"/>
    <lineage>
        <taxon>Bacteria</taxon>
        <taxon>Pseudomonadati</taxon>
        <taxon>Pseudomonadota</taxon>
        <taxon>Gammaproteobacteria</taxon>
        <taxon>Pasteurellales</taxon>
        <taxon>Pasteurellaceae</taxon>
        <taxon>Pasteurella</taxon>
    </lineage>
</organism>
<name>Y681_PASMU</name>
<evidence type="ECO:0000255" key="1"/>
<evidence type="ECO:0000305" key="2"/>
<sequence>MTIKNSFLEYRMTELTQQIEKSTWHSKFAALGPGILMASAAVGGSHIIASTQSGAIYGWQLAIIIILANLFKYPFFRFGVQYTLDSGETLLQGYLRKGKLYIWIFFLLNVFATVINTAAVGLLCAAILTFVLPVQVPVPTLSFIVIGVSTSILLLGKYRLLDGLSKLIMIALTITTVSAVIIALARNGIQGVAPADYVSASPWNLAALGFIVALMGWMPAPIEISAINSMWVIAKRRVSKVSYQDGIWDFNVGYIGTAILALVFLALGALVQHGSSETVQLVGGKYIAQLINMYASTIGEWARGLIAFIAFMCMFGTTITVIDGYSRTNVESLRLILGKKESRPSYLNVAITFAALAGLAIIFYFNNAVGPMLKFAMIASFVSTPVFAYLNLSLVLKGEHRVKGKLLWLSLIGLMYLTSFTLLFIAQQAGWLN</sequence>
<accession>P57864</accession>
<protein>
    <recommendedName>
        <fullName>Uncharacterized protein PM0681</fullName>
    </recommendedName>
</protein>